<comment type="function">
    <text evidence="1">Catalyzes the condensation of the acetyl group of acetyl-CoA with 3-methyl-2-oxobutanoate (2-ketoisovalerate) to form 3-carboxy-3-hydroxy-4-methylpentanoate (2-isopropylmalate).</text>
</comment>
<comment type="catalytic activity">
    <reaction evidence="1">
        <text>3-methyl-2-oxobutanoate + acetyl-CoA + H2O = (2S)-2-isopropylmalate + CoA + H(+)</text>
        <dbReference type="Rhea" id="RHEA:21524"/>
        <dbReference type="ChEBI" id="CHEBI:1178"/>
        <dbReference type="ChEBI" id="CHEBI:11851"/>
        <dbReference type="ChEBI" id="CHEBI:15377"/>
        <dbReference type="ChEBI" id="CHEBI:15378"/>
        <dbReference type="ChEBI" id="CHEBI:57287"/>
        <dbReference type="ChEBI" id="CHEBI:57288"/>
        <dbReference type="EC" id="2.3.3.13"/>
    </reaction>
</comment>
<comment type="cofactor">
    <cofactor evidence="1">
        <name>Mn(2+)</name>
        <dbReference type="ChEBI" id="CHEBI:29035"/>
    </cofactor>
</comment>
<comment type="pathway">
    <text evidence="1">Amino-acid biosynthesis; L-leucine biosynthesis; L-leucine from 3-methyl-2-oxobutanoate: step 1/4.</text>
</comment>
<comment type="subunit">
    <text evidence="1">Homodimer.</text>
</comment>
<comment type="subcellular location">
    <subcellularLocation>
        <location evidence="1">Cytoplasm</location>
    </subcellularLocation>
</comment>
<comment type="similarity">
    <text evidence="1">Belongs to the alpha-IPM synthase/homocitrate synthase family. LeuA type 1 subfamily.</text>
</comment>
<protein>
    <recommendedName>
        <fullName evidence="1">2-isopropylmalate synthase</fullName>
        <ecNumber evidence="1">2.3.3.13</ecNumber>
    </recommendedName>
    <alternativeName>
        <fullName evidence="1">Alpha-IPM synthase</fullName>
    </alternativeName>
    <alternativeName>
        <fullName evidence="1">Alpha-isopropylmalate synthase</fullName>
    </alternativeName>
</protein>
<accession>A0RQK7</accession>
<gene>
    <name evidence="1" type="primary">leuA</name>
    <name type="ordered locus">CFF8240_1344</name>
</gene>
<proteinExistence type="inferred from homology"/>
<name>LEU1_CAMFF</name>
<feature type="chain" id="PRO_1000149159" description="2-isopropylmalate synthase">
    <location>
        <begin position="1"/>
        <end position="506"/>
    </location>
</feature>
<feature type="domain" description="Pyruvate carboxyltransferase" evidence="1">
    <location>
        <begin position="6"/>
        <end position="267"/>
    </location>
</feature>
<feature type="region of interest" description="Regulatory domain" evidence="1">
    <location>
        <begin position="391"/>
        <end position="506"/>
    </location>
</feature>
<feature type="binding site" evidence="1">
    <location>
        <position position="15"/>
    </location>
    <ligand>
        <name>Mn(2+)</name>
        <dbReference type="ChEBI" id="CHEBI:29035"/>
    </ligand>
</feature>
<feature type="binding site" evidence="1">
    <location>
        <position position="201"/>
    </location>
    <ligand>
        <name>Mn(2+)</name>
        <dbReference type="ChEBI" id="CHEBI:29035"/>
    </ligand>
</feature>
<feature type="binding site" evidence="1">
    <location>
        <position position="203"/>
    </location>
    <ligand>
        <name>Mn(2+)</name>
        <dbReference type="ChEBI" id="CHEBI:29035"/>
    </ligand>
</feature>
<feature type="binding site" evidence="1">
    <location>
        <position position="237"/>
    </location>
    <ligand>
        <name>Mn(2+)</name>
        <dbReference type="ChEBI" id="CHEBI:29035"/>
    </ligand>
</feature>
<evidence type="ECO:0000255" key="1">
    <source>
        <dbReference type="HAMAP-Rule" id="MF_01025"/>
    </source>
</evidence>
<reference key="1">
    <citation type="submission" date="2006-11" db="EMBL/GenBank/DDBJ databases">
        <title>Sequence of Campylobacter fetus subsp. fetus 82-40.</title>
        <authorList>
            <person name="Fouts D.E."/>
            <person name="Nelson K.E."/>
        </authorList>
    </citation>
    <scope>NUCLEOTIDE SEQUENCE [LARGE SCALE GENOMIC DNA]</scope>
    <source>
        <strain>82-40</strain>
    </source>
</reference>
<dbReference type="EC" id="2.3.3.13" evidence="1"/>
<dbReference type="EMBL" id="CP000487">
    <property type="protein sequence ID" value="ABK82096.1"/>
    <property type="molecule type" value="Genomic_DNA"/>
</dbReference>
<dbReference type="RefSeq" id="WP_002850159.1">
    <property type="nucleotide sequence ID" value="NC_008599.1"/>
</dbReference>
<dbReference type="SMR" id="A0RQK7"/>
<dbReference type="KEGG" id="cff:CFF8240_1344"/>
<dbReference type="eggNOG" id="COG0119">
    <property type="taxonomic scope" value="Bacteria"/>
</dbReference>
<dbReference type="HOGENOM" id="CLU_022158_0_1_7"/>
<dbReference type="UniPathway" id="UPA00048">
    <property type="reaction ID" value="UER00070"/>
</dbReference>
<dbReference type="Proteomes" id="UP000000760">
    <property type="component" value="Chromosome"/>
</dbReference>
<dbReference type="GO" id="GO:0005737">
    <property type="term" value="C:cytoplasm"/>
    <property type="evidence" value="ECO:0007669"/>
    <property type="project" value="UniProtKB-SubCell"/>
</dbReference>
<dbReference type="GO" id="GO:0003852">
    <property type="term" value="F:2-isopropylmalate synthase activity"/>
    <property type="evidence" value="ECO:0007669"/>
    <property type="project" value="UniProtKB-UniRule"/>
</dbReference>
<dbReference type="GO" id="GO:0003985">
    <property type="term" value="F:acetyl-CoA C-acetyltransferase activity"/>
    <property type="evidence" value="ECO:0007669"/>
    <property type="project" value="UniProtKB-UniRule"/>
</dbReference>
<dbReference type="GO" id="GO:0030145">
    <property type="term" value="F:manganese ion binding"/>
    <property type="evidence" value="ECO:0007669"/>
    <property type="project" value="UniProtKB-UniRule"/>
</dbReference>
<dbReference type="GO" id="GO:0009098">
    <property type="term" value="P:L-leucine biosynthetic process"/>
    <property type="evidence" value="ECO:0007669"/>
    <property type="project" value="UniProtKB-UniRule"/>
</dbReference>
<dbReference type="CDD" id="cd07940">
    <property type="entry name" value="DRE_TIM_IPMS"/>
    <property type="match status" value="1"/>
</dbReference>
<dbReference type="FunFam" id="1.10.238.260:FF:000001">
    <property type="entry name" value="2-isopropylmalate synthase"/>
    <property type="match status" value="1"/>
</dbReference>
<dbReference type="FunFam" id="3.20.20.70:FF:000010">
    <property type="entry name" value="2-isopropylmalate synthase"/>
    <property type="match status" value="1"/>
</dbReference>
<dbReference type="Gene3D" id="1.10.238.260">
    <property type="match status" value="1"/>
</dbReference>
<dbReference type="Gene3D" id="3.30.160.270">
    <property type="match status" value="1"/>
</dbReference>
<dbReference type="Gene3D" id="3.20.20.70">
    <property type="entry name" value="Aldolase class I"/>
    <property type="match status" value="1"/>
</dbReference>
<dbReference type="HAMAP" id="MF_01025">
    <property type="entry name" value="LeuA_type1"/>
    <property type="match status" value="1"/>
</dbReference>
<dbReference type="InterPro" id="IPR050073">
    <property type="entry name" value="2-IPM_HCS-like"/>
</dbReference>
<dbReference type="InterPro" id="IPR013709">
    <property type="entry name" value="2-isopropylmalate_synth_dimer"/>
</dbReference>
<dbReference type="InterPro" id="IPR002034">
    <property type="entry name" value="AIPM/Hcit_synth_CS"/>
</dbReference>
<dbReference type="InterPro" id="IPR013785">
    <property type="entry name" value="Aldolase_TIM"/>
</dbReference>
<dbReference type="InterPro" id="IPR054691">
    <property type="entry name" value="LeuA/HCS_post-cat"/>
</dbReference>
<dbReference type="InterPro" id="IPR036230">
    <property type="entry name" value="LeuA_allosteric_dom_sf"/>
</dbReference>
<dbReference type="InterPro" id="IPR005671">
    <property type="entry name" value="LeuA_bact_synth"/>
</dbReference>
<dbReference type="InterPro" id="IPR000891">
    <property type="entry name" value="PYR_CT"/>
</dbReference>
<dbReference type="NCBIfam" id="TIGR00973">
    <property type="entry name" value="leuA_bact"/>
    <property type="match status" value="1"/>
</dbReference>
<dbReference type="NCBIfam" id="NF002086">
    <property type="entry name" value="PRK00915.1-3"/>
    <property type="match status" value="1"/>
</dbReference>
<dbReference type="PANTHER" id="PTHR10277:SF9">
    <property type="entry name" value="2-ISOPROPYLMALATE SYNTHASE 1, CHLOROPLASTIC-RELATED"/>
    <property type="match status" value="1"/>
</dbReference>
<dbReference type="PANTHER" id="PTHR10277">
    <property type="entry name" value="HOMOCITRATE SYNTHASE-RELATED"/>
    <property type="match status" value="1"/>
</dbReference>
<dbReference type="Pfam" id="PF22617">
    <property type="entry name" value="HCS_D2"/>
    <property type="match status" value="1"/>
</dbReference>
<dbReference type="Pfam" id="PF00682">
    <property type="entry name" value="HMGL-like"/>
    <property type="match status" value="1"/>
</dbReference>
<dbReference type="Pfam" id="PF08502">
    <property type="entry name" value="LeuA_dimer"/>
    <property type="match status" value="1"/>
</dbReference>
<dbReference type="SMART" id="SM00917">
    <property type="entry name" value="LeuA_dimer"/>
    <property type="match status" value="1"/>
</dbReference>
<dbReference type="SUPFAM" id="SSF110921">
    <property type="entry name" value="2-isopropylmalate synthase LeuA, allosteric (dimerisation) domain"/>
    <property type="match status" value="1"/>
</dbReference>
<dbReference type="SUPFAM" id="SSF51569">
    <property type="entry name" value="Aldolase"/>
    <property type="match status" value="1"/>
</dbReference>
<dbReference type="PROSITE" id="PS00815">
    <property type="entry name" value="AIPM_HOMOCIT_SYNTH_1"/>
    <property type="match status" value="1"/>
</dbReference>
<dbReference type="PROSITE" id="PS00816">
    <property type="entry name" value="AIPM_HOMOCIT_SYNTH_2"/>
    <property type="match status" value="1"/>
</dbReference>
<dbReference type="PROSITE" id="PS50991">
    <property type="entry name" value="PYR_CT"/>
    <property type="match status" value="1"/>
</dbReference>
<keyword id="KW-0028">Amino-acid biosynthesis</keyword>
<keyword id="KW-0100">Branched-chain amino acid biosynthesis</keyword>
<keyword id="KW-0963">Cytoplasm</keyword>
<keyword id="KW-0432">Leucine biosynthesis</keyword>
<keyword id="KW-0464">Manganese</keyword>
<keyword id="KW-0479">Metal-binding</keyword>
<keyword id="KW-0808">Transferase</keyword>
<organism>
    <name type="scientific">Campylobacter fetus subsp. fetus (strain 82-40)</name>
    <dbReference type="NCBI Taxonomy" id="360106"/>
    <lineage>
        <taxon>Bacteria</taxon>
        <taxon>Pseudomonadati</taxon>
        <taxon>Campylobacterota</taxon>
        <taxon>Epsilonproteobacteria</taxon>
        <taxon>Campylobacterales</taxon>
        <taxon>Campylobacteraceae</taxon>
        <taxon>Campylobacter</taxon>
    </lineage>
</organism>
<sequence>MDNNKIIVFDTTLRDGEQSPGASMNTEEKIQIALQLERLGVDVMEAGFAAASPGDFDAINQIAKQIHSIRIASLARALEKDIKAAGEAISPAKNRRIHTFIATSPIHMEHKLKMTPDEVIKRAVEAVKYAKTFVDDVEFSCEDAGRSDIVFLKEICAAVVEAGARTLNLPDTVGFRMPDEIYNMVKSMVDFIGDRAIISVHNHNDLGLAVANTLASIKAGARQVECTINGLGERAGNAALEEIVMTIRTRSDEFAPLYTDIVTKEIYATSRLVASITGIEPQPNKAIVGKNAFAHESGIHQDGMLKCAQTYEIIKAEDIGAEKNSLVLGKHSGRHAFKDKLINLGFDLDDNEINEAFIKFKELCDKKKEIFDDDIRALVSHEIIKIPEIYSIQTLSTSSCNAGHSSAAVSIKFSDNIISDAALGNGTADAIFKVIDRISGISGELKDYKVNAVSQGKDALAKITVKVVFEGSSCATIGHGLDIDTMMASAKAYVSALNSYLSMKNR</sequence>